<proteinExistence type="inferred from homology"/>
<sequence>MEEIVEMSLLLDFYGSLLTEKQNKIMDLYYNNDYSLKEISELTNTSRQAVHDIVKRCHKALIQYEERLHMMERFINLENSKEKLLNMLNKVTKENIKEIDHIKKYIIDNI</sequence>
<comment type="function">
    <text evidence="1">Might take part in the signal recognition particle (SRP) pathway. This is inferred from the conservation of its genetic proximity to ftsY/ffh. May be a regulatory protein.</text>
</comment>
<comment type="similarity">
    <text evidence="1">Belongs to the UPF0122 family.</text>
</comment>
<accession>B1KWP0</accession>
<name>Y1827_CLOBM</name>
<feature type="chain" id="PRO_1000100811" description="UPF0122 protein CLK_1827">
    <location>
        <begin position="1"/>
        <end position="110"/>
    </location>
</feature>
<protein>
    <recommendedName>
        <fullName evidence="1">UPF0122 protein CLK_1827</fullName>
    </recommendedName>
</protein>
<organism>
    <name type="scientific">Clostridium botulinum (strain Loch Maree / Type A3)</name>
    <dbReference type="NCBI Taxonomy" id="498214"/>
    <lineage>
        <taxon>Bacteria</taxon>
        <taxon>Bacillati</taxon>
        <taxon>Bacillota</taxon>
        <taxon>Clostridia</taxon>
        <taxon>Eubacteriales</taxon>
        <taxon>Clostridiaceae</taxon>
        <taxon>Clostridium</taxon>
    </lineage>
</organism>
<gene>
    <name type="ordered locus">CLK_1827</name>
</gene>
<reference key="1">
    <citation type="journal article" date="2007" name="PLoS ONE">
        <title>Analysis of the neurotoxin complex genes in Clostridium botulinum A1-A4 and B1 strains: BoNT/A3, /Ba4 and /B1 clusters are located within plasmids.</title>
        <authorList>
            <person name="Smith T.J."/>
            <person name="Hill K.K."/>
            <person name="Foley B.T."/>
            <person name="Detter J.C."/>
            <person name="Munk A.C."/>
            <person name="Bruce D.C."/>
            <person name="Doggett N.A."/>
            <person name="Smith L.A."/>
            <person name="Marks J.D."/>
            <person name="Xie G."/>
            <person name="Brettin T.S."/>
        </authorList>
    </citation>
    <scope>NUCLEOTIDE SEQUENCE [LARGE SCALE GENOMIC DNA]</scope>
    <source>
        <strain>Loch Maree / Type A3</strain>
    </source>
</reference>
<evidence type="ECO:0000255" key="1">
    <source>
        <dbReference type="HAMAP-Rule" id="MF_00245"/>
    </source>
</evidence>
<dbReference type="EMBL" id="CP000962">
    <property type="protein sequence ID" value="ACA53915.1"/>
    <property type="molecule type" value="Genomic_DNA"/>
</dbReference>
<dbReference type="RefSeq" id="WP_012342089.1">
    <property type="nucleotide sequence ID" value="NC_010520.1"/>
</dbReference>
<dbReference type="SMR" id="B1KWP0"/>
<dbReference type="KEGG" id="cbl:CLK_1827"/>
<dbReference type="HOGENOM" id="CLU_129218_0_1_9"/>
<dbReference type="Gene3D" id="1.10.10.10">
    <property type="entry name" value="Winged helix-like DNA-binding domain superfamily/Winged helix DNA-binding domain"/>
    <property type="match status" value="1"/>
</dbReference>
<dbReference type="HAMAP" id="MF_00245">
    <property type="entry name" value="UPF0122"/>
    <property type="match status" value="1"/>
</dbReference>
<dbReference type="InterPro" id="IPR013324">
    <property type="entry name" value="RNA_pol_sigma_r3/r4-like"/>
</dbReference>
<dbReference type="InterPro" id="IPR007394">
    <property type="entry name" value="UPF0122"/>
</dbReference>
<dbReference type="InterPro" id="IPR054831">
    <property type="entry name" value="UPF0122_fam_protein"/>
</dbReference>
<dbReference type="InterPro" id="IPR036388">
    <property type="entry name" value="WH-like_DNA-bd_sf"/>
</dbReference>
<dbReference type="NCBIfam" id="NF001072">
    <property type="entry name" value="PRK00118.2-2"/>
    <property type="match status" value="1"/>
</dbReference>
<dbReference type="NCBIfam" id="NF001074">
    <property type="entry name" value="PRK00118.2-4"/>
    <property type="match status" value="1"/>
</dbReference>
<dbReference type="NCBIfam" id="NF045758">
    <property type="entry name" value="YlxM"/>
    <property type="match status" value="1"/>
</dbReference>
<dbReference type="PANTHER" id="PTHR40083">
    <property type="entry name" value="UPF0122 PROTEIN CBO2450/CLC_2298"/>
    <property type="match status" value="1"/>
</dbReference>
<dbReference type="PANTHER" id="PTHR40083:SF1">
    <property type="entry name" value="UPF0122 PROTEIN YLXM"/>
    <property type="match status" value="1"/>
</dbReference>
<dbReference type="Pfam" id="PF04297">
    <property type="entry name" value="UPF0122"/>
    <property type="match status" value="1"/>
</dbReference>
<dbReference type="SUPFAM" id="SSF88659">
    <property type="entry name" value="Sigma3 and sigma4 domains of RNA polymerase sigma factors"/>
    <property type="match status" value="1"/>
</dbReference>